<dbReference type="EMBL" id="AE005672">
    <property type="protein sequence ID" value="AAK75268.1"/>
    <property type="molecule type" value="Genomic_DNA"/>
</dbReference>
<dbReference type="PIR" id="C95134">
    <property type="entry name" value="C95134"/>
</dbReference>
<dbReference type="RefSeq" id="WP_000817881.1">
    <property type="nucleotide sequence ID" value="NZ_CP155539.1"/>
</dbReference>
<dbReference type="SMR" id="Q97QP2"/>
<dbReference type="IntAct" id="Q97QP2">
    <property type="interactions" value="6"/>
</dbReference>
<dbReference type="PaxDb" id="170187-SP_1159"/>
<dbReference type="EnsemblBacteria" id="AAK75268">
    <property type="protein sequence ID" value="AAK75268"/>
    <property type="gene ID" value="SP_1159"/>
</dbReference>
<dbReference type="KEGG" id="spn:SP_1159"/>
<dbReference type="eggNOG" id="COG4974">
    <property type="taxonomic scope" value="Bacteria"/>
</dbReference>
<dbReference type="PhylomeDB" id="Q97QP2"/>
<dbReference type="BioCyc" id="SPNE170187:G1FZB-1179-MONOMER"/>
<dbReference type="Proteomes" id="UP000000585">
    <property type="component" value="Chromosome"/>
</dbReference>
<dbReference type="GO" id="GO:0005737">
    <property type="term" value="C:cytoplasm"/>
    <property type="evidence" value="ECO:0007669"/>
    <property type="project" value="UniProtKB-SubCell"/>
</dbReference>
<dbReference type="GO" id="GO:0003677">
    <property type="term" value="F:DNA binding"/>
    <property type="evidence" value="ECO:0007669"/>
    <property type="project" value="UniProtKB-KW"/>
</dbReference>
<dbReference type="GO" id="GO:0009037">
    <property type="term" value="F:tyrosine-based site-specific recombinase activity"/>
    <property type="evidence" value="ECO:0007669"/>
    <property type="project" value="UniProtKB-UniRule"/>
</dbReference>
<dbReference type="GO" id="GO:0051301">
    <property type="term" value="P:cell division"/>
    <property type="evidence" value="ECO:0007669"/>
    <property type="project" value="UniProtKB-KW"/>
</dbReference>
<dbReference type="GO" id="GO:0007059">
    <property type="term" value="P:chromosome segregation"/>
    <property type="evidence" value="ECO:0007669"/>
    <property type="project" value="UniProtKB-UniRule"/>
</dbReference>
<dbReference type="GO" id="GO:0006310">
    <property type="term" value="P:DNA recombination"/>
    <property type="evidence" value="ECO:0007669"/>
    <property type="project" value="UniProtKB-UniRule"/>
</dbReference>
<dbReference type="CDD" id="cd00397">
    <property type="entry name" value="DNA_BRE_C"/>
    <property type="match status" value="1"/>
</dbReference>
<dbReference type="Gene3D" id="1.10.150.130">
    <property type="match status" value="1"/>
</dbReference>
<dbReference type="Gene3D" id="1.10.443.10">
    <property type="entry name" value="Intergrase catalytic core"/>
    <property type="match status" value="1"/>
</dbReference>
<dbReference type="HAMAP" id="MF_01816">
    <property type="entry name" value="Recomb_XerS"/>
    <property type="match status" value="1"/>
</dbReference>
<dbReference type="InterPro" id="IPR044068">
    <property type="entry name" value="CB"/>
</dbReference>
<dbReference type="InterPro" id="IPR011010">
    <property type="entry name" value="DNA_brk_join_enz"/>
</dbReference>
<dbReference type="InterPro" id="IPR013762">
    <property type="entry name" value="Integrase-like_cat_sf"/>
</dbReference>
<dbReference type="InterPro" id="IPR002104">
    <property type="entry name" value="Integrase_catalytic"/>
</dbReference>
<dbReference type="InterPro" id="IPR010998">
    <property type="entry name" value="Integrase_recombinase_N"/>
</dbReference>
<dbReference type="InterPro" id="IPR004107">
    <property type="entry name" value="Integrase_SAM-like_N"/>
</dbReference>
<dbReference type="InterPro" id="IPR023670">
    <property type="entry name" value="Recomb_XerS"/>
</dbReference>
<dbReference type="InterPro" id="IPR050090">
    <property type="entry name" value="Tyrosine_recombinase_XerCD"/>
</dbReference>
<dbReference type="NCBIfam" id="NF003462">
    <property type="entry name" value="PRK05084.1"/>
    <property type="match status" value="1"/>
</dbReference>
<dbReference type="PANTHER" id="PTHR30349">
    <property type="entry name" value="PHAGE INTEGRASE-RELATED"/>
    <property type="match status" value="1"/>
</dbReference>
<dbReference type="PANTHER" id="PTHR30349:SF77">
    <property type="entry name" value="TYROSINE RECOMBINASE XERC"/>
    <property type="match status" value="1"/>
</dbReference>
<dbReference type="Pfam" id="PF02899">
    <property type="entry name" value="Phage_int_SAM_1"/>
    <property type="match status" value="1"/>
</dbReference>
<dbReference type="Pfam" id="PF00589">
    <property type="entry name" value="Phage_integrase"/>
    <property type="match status" value="1"/>
</dbReference>
<dbReference type="SUPFAM" id="SSF56349">
    <property type="entry name" value="DNA breaking-rejoining enzymes"/>
    <property type="match status" value="1"/>
</dbReference>
<dbReference type="PROSITE" id="PS51900">
    <property type="entry name" value="CB"/>
    <property type="match status" value="1"/>
</dbReference>
<dbReference type="PROSITE" id="PS51898">
    <property type="entry name" value="TYR_RECOMBINASE"/>
    <property type="match status" value="1"/>
</dbReference>
<proteinExistence type="evidence at protein level"/>
<comment type="function">
    <text evidence="1">Site-specific tyrosine recombinase, which acts by catalyzing the cutting and rejoining of the recombining DNA molecules. Essential to convert dimers of the bacterial chromosome into monomers to permit their segregation at cell division.</text>
</comment>
<comment type="activity regulation">
    <text evidence="1">FtsK is required for recombination.</text>
</comment>
<comment type="interaction">
    <interactant intactId="EBI-2207218">
        <id>Q97QP2</id>
    </interactant>
    <interactant intactId="EBI-2207316">
        <id>P63544</id>
        <label>apt</label>
    </interactant>
    <organismsDiffer>false</organismsDiffer>
    <experiments>2</experiments>
</comment>
<comment type="interaction">
    <interactant intactId="EBI-2207218">
        <id>Q97QP2</id>
    </interactant>
    <interactant intactId="EBI-2207206">
        <id>Q97QS2</id>
        <label>eno</label>
    </interactant>
    <organismsDiffer>false</organismsDiffer>
    <experiments>2</experiments>
</comment>
<comment type="interaction">
    <interactant intactId="EBI-2207218">
        <id>Q97QP2</id>
    </interactant>
    <interactant intactId="EBI-2207053">
        <id>Q97SE5</id>
        <label>gatC</label>
    </interactant>
    <organismsDiffer>false</organismsDiffer>
    <experiments>2</experiments>
</comment>
<comment type="interaction">
    <interactant intactId="EBI-2207218">
        <id>Q97QP2</id>
    </interactant>
    <interactant intactId="EBI-2206949">
        <id>Q97NV3</id>
        <label>groES</label>
    </interactant>
    <organismsDiffer>false</organismsDiffer>
    <experiments>2</experiments>
</comment>
<comment type="interaction">
    <interactant intactId="EBI-2207218">
        <id>Q97QP2</id>
    </interactant>
    <interactant intactId="EBI-2207065">
        <id>Q97S73</id>
        <label>grpE</label>
    </interactant>
    <organismsDiffer>false</organismsDiffer>
    <experiments>2</experiments>
</comment>
<comment type="interaction">
    <interactant intactId="EBI-2207218">
        <id>Q97QP2</id>
    </interactant>
    <interactant intactId="EBI-2207435">
        <id>P0A4T1</id>
        <label>malR</label>
    </interactant>
    <organismsDiffer>false</organismsDiffer>
    <experiments>2</experiments>
</comment>
<comment type="subcellular location">
    <subcellularLocation>
        <location evidence="1">Cytoplasm</location>
    </subcellularLocation>
</comment>
<comment type="similarity">
    <text evidence="1">Belongs to the 'phage' integrase family. XerS subfamily.</text>
</comment>
<gene>
    <name evidence="1" type="primary">xerS</name>
    <name type="ordered locus">SP_1159</name>
</gene>
<evidence type="ECO:0000255" key="1">
    <source>
        <dbReference type="HAMAP-Rule" id="MF_01816"/>
    </source>
</evidence>
<evidence type="ECO:0000255" key="2">
    <source>
        <dbReference type="PROSITE-ProRule" id="PRU01246"/>
    </source>
</evidence>
<evidence type="ECO:0000255" key="3">
    <source>
        <dbReference type="PROSITE-ProRule" id="PRU01248"/>
    </source>
</evidence>
<protein>
    <recommendedName>
        <fullName evidence="1">Tyrosine recombinase XerS</fullName>
    </recommendedName>
</protein>
<keyword id="KW-0131">Cell cycle</keyword>
<keyword id="KW-0132">Cell division</keyword>
<keyword id="KW-0159">Chromosome partition</keyword>
<keyword id="KW-0963">Cytoplasm</keyword>
<keyword id="KW-0229">DNA integration</keyword>
<keyword id="KW-0233">DNA recombination</keyword>
<keyword id="KW-0238">DNA-binding</keyword>
<keyword id="KW-1185">Reference proteome</keyword>
<sequence>MKREILLERIDKLKQLMPWYVLEYYQSKLAVPYSFTTLYEYLKEYDRFFSWVLESGISNADKISDIPLSVLENMSKKDMESFILYLRERPLLNANTTKQGVSQTTINRTLSALSSLYKYLTEEVENDQGEPYFYRNVMKKVSTKKKKETLAARAENIKQKLFLGDETEGFLTYIDQEHPQQLSNRALSSFNKNKERDLAIIALLLASGVRLSEAVNLDLRDLNLKMMVIDVTRKGCKRDSVNVAAFAKPYLENYLAIRNQRYKTEKTDTALFLTLYRGVPNRIDASSVEKMVAKYSEDFKVRVTPHKLRHTLATRLYDATKSQVLVSHQLGHASTQVTDLYTHIVSDEQKNALDSL</sequence>
<name>XERS_STRPN</name>
<feature type="chain" id="PRO_0000095363" description="Tyrosine recombinase XerS">
    <location>
        <begin position="1"/>
        <end position="356"/>
    </location>
</feature>
<feature type="domain" description="Core-binding (CB)" evidence="3">
    <location>
        <begin position="16"/>
        <end position="121"/>
    </location>
</feature>
<feature type="domain" description="Tyr recombinase" evidence="2">
    <location>
        <begin position="169"/>
        <end position="354"/>
    </location>
</feature>
<feature type="active site" evidence="1">
    <location>
        <position position="210"/>
    </location>
</feature>
<feature type="active site" evidence="1">
    <location>
        <position position="234"/>
    </location>
</feature>
<feature type="active site" evidence="1">
    <location>
        <position position="306"/>
    </location>
</feature>
<feature type="active site" evidence="1">
    <location>
        <position position="309"/>
    </location>
</feature>
<feature type="active site" evidence="1">
    <location>
        <position position="332"/>
    </location>
</feature>
<feature type="active site" description="O-(3'-phospho-DNA)-tyrosine intermediate" evidence="1">
    <location>
        <position position="341"/>
    </location>
</feature>
<reference key="1">
    <citation type="journal article" date="2001" name="Science">
        <title>Complete genome sequence of a virulent isolate of Streptococcus pneumoniae.</title>
        <authorList>
            <person name="Tettelin H."/>
            <person name="Nelson K.E."/>
            <person name="Paulsen I.T."/>
            <person name="Eisen J.A."/>
            <person name="Read T.D."/>
            <person name="Peterson S.N."/>
            <person name="Heidelberg J.F."/>
            <person name="DeBoy R.T."/>
            <person name="Haft D.H."/>
            <person name="Dodson R.J."/>
            <person name="Durkin A.S."/>
            <person name="Gwinn M.L."/>
            <person name="Kolonay J.F."/>
            <person name="Nelson W.C."/>
            <person name="Peterson J.D."/>
            <person name="Umayam L.A."/>
            <person name="White O."/>
            <person name="Salzberg S.L."/>
            <person name="Lewis M.R."/>
            <person name="Radune D."/>
            <person name="Holtzapple E.K."/>
            <person name="Khouri H.M."/>
            <person name="Wolf A.M."/>
            <person name="Utterback T.R."/>
            <person name="Hansen C.L."/>
            <person name="McDonald L.A."/>
            <person name="Feldblyum T.V."/>
            <person name="Angiuoli S.V."/>
            <person name="Dickinson T."/>
            <person name="Hickey E.K."/>
            <person name="Holt I.E."/>
            <person name="Loftus B.J."/>
            <person name="Yang F."/>
            <person name="Smith H.O."/>
            <person name="Venter J.C."/>
            <person name="Dougherty B.A."/>
            <person name="Morrison D.A."/>
            <person name="Hollingshead S.K."/>
            <person name="Fraser C.M."/>
        </authorList>
    </citation>
    <scope>NUCLEOTIDE SEQUENCE [LARGE SCALE GENOMIC DNA]</scope>
    <source>
        <strain>ATCC BAA-334 / TIGR4</strain>
    </source>
</reference>
<organism>
    <name type="scientific">Streptococcus pneumoniae serotype 4 (strain ATCC BAA-334 / TIGR4)</name>
    <dbReference type="NCBI Taxonomy" id="170187"/>
    <lineage>
        <taxon>Bacteria</taxon>
        <taxon>Bacillati</taxon>
        <taxon>Bacillota</taxon>
        <taxon>Bacilli</taxon>
        <taxon>Lactobacillales</taxon>
        <taxon>Streptococcaceae</taxon>
        <taxon>Streptococcus</taxon>
    </lineage>
</organism>
<accession>Q97QP2</accession>